<accession>A0A2Z5U368</accession>
<dbReference type="EC" id="1.14.99.-" evidence="4"/>
<dbReference type="EMBL" id="LC316945">
    <property type="protein sequence ID" value="BBB04328.1"/>
    <property type="molecule type" value="Genomic_DNA"/>
</dbReference>
<dbReference type="GO" id="GO:0016020">
    <property type="term" value="C:membrane"/>
    <property type="evidence" value="ECO:0007669"/>
    <property type="project" value="UniProtKB-SubCell"/>
</dbReference>
<dbReference type="GO" id="GO:0071949">
    <property type="term" value="F:FAD binding"/>
    <property type="evidence" value="ECO:0007669"/>
    <property type="project" value="InterPro"/>
</dbReference>
<dbReference type="GO" id="GO:0004497">
    <property type="term" value="F:monooxygenase activity"/>
    <property type="evidence" value="ECO:0007669"/>
    <property type="project" value="UniProtKB-KW"/>
</dbReference>
<dbReference type="Gene3D" id="3.50.50.60">
    <property type="entry name" value="FAD/NAD(P)-binding domain"/>
    <property type="match status" value="1"/>
</dbReference>
<dbReference type="InterPro" id="IPR002938">
    <property type="entry name" value="FAD-bd"/>
</dbReference>
<dbReference type="InterPro" id="IPR050493">
    <property type="entry name" value="FAD-dep_Monooxygenase_BioMet"/>
</dbReference>
<dbReference type="InterPro" id="IPR003953">
    <property type="entry name" value="FAD-dep_OxRdtase_2_FAD-bd"/>
</dbReference>
<dbReference type="InterPro" id="IPR036188">
    <property type="entry name" value="FAD/NAD-bd_sf"/>
</dbReference>
<dbReference type="PANTHER" id="PTHR13789">
    <property type="entry name" value="MONOOXYGENASE"/>
    <property type="match status" value="1"/>
</dbReference>
<dbReference type="PANTHER" id="PTHR13789:SF236">
    <property type="entry name" value="MONOOXYGENASE, PUTATIVE (AFU_ORTHOLOGUE AFUA_6G12060)-RELATED"/>
    <property type="match status" value="1"/>
</dbReference>
<dbReference type="Pfam" id="PF00890">
    <property type="entry name" value="FAD_binding_2"/>
    <property type="match status" value="1"/>
</dbReference>
<dbReference type="Pfam" id="PF01494">
    <property type="entry name" value="FAD_binding_3"/>
    <property type="match status" value="1"/>
</dbReference>
<dbReference type="PRINTS" id="PR00420">
    <property type="entry name" value="RNGMNOXGNASE"/>
</dbReference>
<dbReference type="SUPFAM" id="SSF51905">
    <property type="entry name" value="FAD/NAD(P)-binding domain"/>
    <property type="match status" value="1"/>
</dbReference>
<protein>
    <recommendedName>
        <fullName evidence="6">FAD-dependent monooxygenase okaB</fullName>
        <ecNumber evidence="4">1.14.99.-</ecNumber>
    </recommendedName>
    <alternativeName>
        <fullName evidence="6">Okaramines biosynthesis cluster protein B</fullName>
    </alternativeName>
</protein>
<reference key="1">
    <citation type="journal article" date="2018" name="ACS Chem. Biol.">
        <title>Biosynthesis and Structure-Activity Relationship Studies of Okaramines That Target Insect Glutamate-Gated Chloride Channels.</title>
        <authorList>
            <person name="Kato N."/>
            <person name="Furutani S."/>
            <person name="Otaka J."/>
            <person name="Noguchi A."/>
            <person name="Kinugasa K."/>
            <person name="Kai K."/>
            <person name="Hayashi H."/>
            <person name="Ihara M."/>
            <person name="Takahashi S."/>
            <person name="Matsuda K."/>
            <person name="Osada H."/>
        </authorList>
    </citation>
    <scope>NUCLEOTIDE SEQUENCE [GENOMIC DNA]</scope>
    <scope>FUNCTION</scope>
    <scope>DISRUPTION PHENOTYPE</scope>
    <scope>PATHWAY</scope>
    <source>
        <strain>ATCC 90288 / AK-40</strain>
    </source>
</reference>
<reference key="2">
    <citation type="journal article" date="2017" name="Angew. Chem. Int. Ed.">
        <title>Biosynthesis of Complex Indole Alkaloids: Elucidation of the Concise Pathway of Okaramines.</title>
        <authorList>
            <person name="Lai C.Y."/>
            <person name="Lo I.W."/>
            <person name="Hewage R.T."/>
            <person name="Chen Y.C."/>
            <person name="Chen C.T."/>
            <person name="Lee C.F."/>
            <person name="Lin S."/>
            <person name="Tang M.C."/>
            <person name="Lin H.C."/>
        </authorList>
    </citation>
    <scope>FUNCTION</scope>
    <scope>DISRUPTION PHENOTYPE</scope>
    <scope>CATALYTIC ACTIVITY</scope>
    <scope>PATHWAY</scope>
</reference>
<comment type="function">
    <text evidence="4 5">FAD-dependent monooxygenase; part of the gene cluster that mediates the biosynthesis of okaramine B, a prenylated indole alkaloid that possesses an unusual octacyclic ring system, including a four-membered azetidine ring and an eight-membered azocine ring, and that exhibits insecticidal activity against silkworm larvae (PubMed:28631282, PubMed:29384650). Within the pathway, okaC performs indole 2,3-epoxidation, facilitating the formation of the hexahydropyrrolo[2,3-b]indole (HPI) moiety of okaramine C (PubMed:28631282). okaC then performs asymmetric reverse prenylation of cyclo(L-Trp-L-Trp) at N-1 and C-2' of the indole ring to produce the cyclic prenylated tryptophan dimer cyclo(N8-(alpha,alpha-dimethylallyl)-L-Trp-6a-(alpha,alpha-dime-thylallyl)-L-Trp) (PubMed:28631282). The biosynthesis begins with the NRPS okaA that condenses two tryptophan molecules into cyclo(L-Trp-L-Trp). Prenylation by the prenyltransferase okaC then leads to the formation of cyclo(N8-(alpha,alpha-dimethylallyl)-L-Trp-6a-(alpha,alpha-dime-thylallyl)-L-Trp). This is followed by indole 2,3-epoxidation by the FAD-dependent monooxygenase okaB to facilitate the formation of the hexahydropyrrolo[2,3-b]indole (HPI) moiety of okaramine C. The cytochrome P450 monooxygenase okaD then likely catalyzes formation of the eight-membered ring of okaramine A. The dioxygenase okaE further forms the unusual 2-dimethyl-3-methyl-azetidine ring to yield 12-deshydroxyl okaramine E, as well as the hydroxylation of 12-deshydroxyl okaramine E to produce okaramine E. The cytochrome P450 monoxygenase okaG converts 12-deshydroxyl okaramine E into 3-desmethyl okaramine B which is further methylated by the methyltransferase okaF into okaramine B. In a shunt pathway, okaG and okaF together are also able to convert okaramine E into okaramine D (PubMed:28631282, PubMed:29384650). Okaramine H is produced by nonenzymatic conversion from okaramine A (PubMed:29384650).</text>
</comment>
<comment type="catalytic activity">
    <reaction evidence="4">
        <text>cyclo(N(8)-(alpha,alpha-dimethylallyl)-L-Trp-6a-(alpha,alpha-dimethylallyl)-L-Trp) + AH2 + O2 = okaramine C + A + H2O</text>
        <dbReference type="Rhea" id="RHEA:82699"/>
        <dbReference type="ChEBI" id="CHEBI:13193"/>
        <dbReference type="ChEBI" id="CHEBI:15377"/>
        <dbReference type="ChEBI" id="CHEBI:15379"/>
        <dbReference type="ChEBI" id="CHEBI:17499"/>
        <dbReference type="ChEBI" id="CHEBI:181817"/>
        <dbReference type="ChEBI" id="CHEBI:193028"/>
    </reaction>
    <physiologicalReaction direction="left-to-right" evidence="4">
        <dbReference type="Rhea" id="RHEA:82700"/>
    </physiologicalReaction>
</comment>
<comment type="pathway">
    <text evidence="4 5">Alkaloid biosynthesis.</text>
</comment>
<comment type="subcellular location">
    <subcellularLocation>
        <location evidence="3">Membrane</location>
        <topology evidence="3">Single-pass membrane protein</topology>
    </subcellularLocation>
</comment>
<comment type="disruption phenotype">
    <text evidence="4 5">Abolishes the production of okaramine B and leads to the accumulation of the cyclic prenylated tryptophan dimer cyclo(N8-(alpha,alpha-dimethylallyl)-L-Trp-6a-(alpha,alpha-dimethylallyl)-L-Trp).</text>
</comment>
<comment type="similarity">
    <text evidence="7">Belongs to the paxM FAD-dependent monooxygenase family.</text>
</comment>
<evidence type="ECO:0000250" key="1">
    <source>
        <dbReference type="UniProtKB" id="B8M9J8"/>
    </source>
</evidence>
<evidence type="ECO:0000250" key="2">
    <source>
        <dbReference type="UniProtKB" id="L0E4H0"/>
    </source>
</evidence>
<evidence type="ECO:0000255" key="3"/>
<evidence type="ECO:0000269" key="4">
    <source>
    </source>
</evidence>
<evidence type="ECO:0000269" key="5">
    <source>
    </source>
</evidence>
<evidence type="ECO:0000303" key="6">
    <source>
    </source>
</evidence>
<evidence type="ECO:0000305" key="7"/>
<gene>
    <name evidence="6" type="primary">okaB</name>
</gene>
<organism>
    <name type="scientific">Penicillium ochrochloron</name>
    <dbReference type="NCBI Taxonomy" id="69780"/>
    <lineage>
        <taxon>Eukaryota</taxon>
        <taxon>Fungi</taxon>
        <taxon>Dikarya</taxon>
        <taxon>Ascomycota</taxon>
        <taxon>Pezizomycotina</taxon>
        <taxon>Eurotiomycetes</taxon>
        <taxon>Eurotiomycetidae</taxon>
        <taxon>Eurotiales</taxon>
        <taxon>Aspergillaceae</taxon>
        <taxon>Penicillium</taxon>
    </lineage>
</organism>
<keyword id="KW-0274">FAD</keyword>
<keyword id="KW-0285">Flavoprotein</keyword>
<keyword id="KW-0472">Membrane</keyword>
<keyword id="KW-0503">Monooxygenase</keyword>
<keyword id="KW-0520">NAD</keyword>
<keyword id="KW-0521">NADP</keyword>
<keyword id="KW-0560">Oxidoreductase</keyword>
<keyword id="KW-0812">Transmembrane</keyword>
<keyword id="KW-1133">Transmembrane helix</keyword>
<name>OKAB_PENOH</name>
<proteinExistence type="evidence at protein level"/>
<sequence>MTVHSAESNGSNRIVIIIVGLGIAGLSAAIECHGKGHQVMVFEKYSDLKRTEGDGISIGSNGARVSAKWGDGTFHELIRPLEYQTNKAKVSDYTGYSYGTFELHGYNEGRGYTVNRGQLVYAMHEYARSLGIPIFLNSEVTGYWETEDEAGVVVDGKRISADCVVCAEGIHSSGRLIITGQKMELKETGYAASRGYLDACVTSQDSKLNWILGEEEAEAEDCVYGWLGPGVHFGITTKKRENELFWYCSHKDACTPSKDIDGTINQILHCMEGWAARDQLETVMRKAKKGRFVSETLAIRTPLATWLSPKRRMIVIGDAAHAALPSSGQGGTQAIEDAATLAICLELAGKKDVALALSVTEKLRHQRAQIVQQGGLAVLQFVMNHVDFEALRTDPTMVKPPHPAWILDHDCQEYAYREFVKAAEAIQDGEEYVPHNIPRDGKYSMEYNSQ</sequence>
<feature type="chain" id="PRO_0000461556" description="FAD-dependent monooxygenase okaB">
    <location>
        <begin position="1"/>
        <end position="450"/>
    </location>
</feature>
<feature type="transmembrane region" description="Helical" evidence="3">
    <location>
        <begin position="14"/>
        <end position="34"/>
    </location>
</feature>
<feature type="active site" evidence="2">
    <location>
        <position position="194"/>
    </location>
</feature>
<feature type="binding site" evidence="1">
    <location>
        <position position="43"/>
    </location>
    <ligand>
        <name>FAD</name>
        <dbReference type="ChEBI" id="CHEBI:57692"/>
    </ligand>
</feature>
<feature type="binding site" evidence="1">
    <location>
        <position position="116"/>
    </location>
    <ligand>
        <name>FAD</name>
        <dbReference type="ChEBI" id="CHEBI:57692"/>
    </ligand>
</feature>
<feature type="binding site" evidence="1">
    <location>
        <position position="318"/>
    </location>
    <ligand>
        <name>FAD</name>
        <dbReference type="ChEBI" id="CHEBI:57692"/>
    </ligand>
</feature>
<feature type="binding site" evidence="1">
    <location>
        <position position="331"/>
    </location>
    <ligand>
        <name>FAD</name>
        <dbReference type="ChEBI" id="CHEBI:57692"/>
    </ligand>
</feature>